<comment type="function">
    <text evidence="1">F(1)F(0) ATP synthase produces ATP from ADP in the presence of a proton or sodium gradient. F-type ATPases consist of two structural domains, F(1) containing the extramembraneous catalytic core and F(0) containing the membrane proton channel, linked together by a central stalk and a peripheral stalk. During catalysis, ATP synthesis in the catalytic domain of F(1) is coupled via a rotary mechanism of the central stalk subunits to proton translocation.</text>
</comment>
<comment type="function">
    <text evidence="1">Component of the F(0) channel, it forms part of the peripheral stalk, linking F(1) to F(0).</text>
</comment>
<comment type="subunit">
    <text evidence="1">F-type ATPases have 2 components, F(1) - the catalytic core - and F(0) - the membrane proton channel. F(1) has five subunits: alpha(3), beta(3), gamma(1), delta(1), epsilon(1). F(0) has three main subunits: a(1), b(2) and c(10-14). The alpha and beta chains form an alternating ring which encloses part of the gamma chain. F(1) is attached to F(0) by a central stalk formed by the gamma and epsilon chains, while a peripheral stalk is formed by the delta and b chains.</text>
</comment>
<comment type="subcellular location">
    <subcellularLocation>
        <location evidence="1">Cell membrane</location>
        <topology evidence="1">Single-pass membrane protein</topology>
    </subcellularLocation>
</comment>
<comment type="similarity">
    <text evidence="1">Belongs to the ATPase B chain family.</text>
</comment>
<sequence length="196" mass="21187">MSATSILIAAAESGHSDENVLIPPLSELLIGTLSFALLVAFFFWKIRPQIARTYAQRTERIEGGLARAEAAQREAQALLEQYRAQLAEARTEAARIREEAHSEGRQITEELRAAAQREIAEIKARADAQLAADRAQIVAQVRREVGEIAVDLASKIVGFQLESSATQNRLIDDFIAALDNSAEGVGTVAAPVRPGG</sequence>
<name>ATPF_FRACC</name>
<proteinExistence type="inferred from homology"/>
<reference key="1">
    <citation type="journal article" date="2007" name="Genome Res.">
        <title>Genome characteristics of facultatively symbiotic Frankia sp. strains reflect host range and host plant biogeography.</title>
        <authorList>
            <person name="Normand P."/>
            <person name="Lapierre P."/>
            <person name="Tisa L.S."/>
            <person name="Gogarten J.P."/>
            <person name="Alloisio N."/>
            <person name="Bagnarol E."/>
            <person name="Bassi C.A."/>
            <person name="Berry A.M."/>
            <person name="Bickhart D.M."/>
            <person name="Choisne N."/>
            <person name="Couloux A."/>
            <person name="Cournoyer B."/>
            <person name="Cruveiller S."/>
            <person name="Daubin V."/>
            <person name="Demange N."/>
            <person name="Francino M.P."/>
            <person name="Goltsman E."/>
            <person name="Huang Y."/>
            <person name="Kopp O.R."/>
            <person name="Labarre L."/>
            <person name="Lapidus A."/>
            <person name="Lavire C."/>
            <person name="Marechal J."/>
            <person name="Martinez M."/>
            <person name="Mastronunzio J.E."/>
            <person name="Mullin B.C."/>
            <person name="Niemann J."/>
            <person name="Pujic P."/>
            <person name="Rawnsley T."/>
            <person name="Rouy Z."/>
            <person name="Schenowitz C."/>
            <person name="Sellstedt A."/>
            <person name="Tavares F."/>
            <person name="Tomkins J.P."/>
            <person name="Vallenet D."/>
            <person name="Valverde C."/>
            <person name="Wall L.G."/>
            <person name="Wang Y."/>
            <person name="Medigue C."/>
            <person name="Benson D.R."/>
        </authorList>
    </citation>
    <scope>NUCLEOTIDE SEQUENCE [LARGE SCALE GENOMIC DNA]</scope>
    <source>
        <strain>DSM 45818 / CECT 9043 / HFP020203 / CcI3</strain>
    </source>
</reference>
<keyword id="KW-0066">ATP synthesis</keyword>
<keyword id="KW-1003">Cell membrane</keyword>
<keyword id="KW-0138">CF(0)</keyword>
<keyword id="KW-0375">Hydrogen ion transport</keyword>
<keyword id="KW-0406">Ion transport</keyword>
<keyword id="KW-0472">Membrane</keyword>
<keyword id="KW-1185">Reference proteome</keyword>
<keyword id="KW-0812">Transmembrane</keyword>
<keyword id="KW-1133">Transmembrane helix</keyword>
<keyword id="KW-0813">Transport</keyword>
<evidence type="ECO:0000255" key="1">
    <source>
        <dbReference type="HAMAP-Rule" id="MF_01398"/>
    </source>
</evidence>
<accession>Q2J6M9</accession>
<feature type="chain" id="PRO_0000368497" description="ATP synthase subunit b">
    <location>
        <begin position="1"/>
        <end position="196"/>
    </location>
</feature>
<feature type="transmembrane region" description="Helical" evidence="1">
    <location>
        <begin position="24"/>
        <end position="44"/>
    </location>
</feature>
<dbReference type="EMBL" id="CP000249">
    <property type="protein sequence ID" value="ABD13063.1"/>
    <property type="molecule type" value="Genomic_DNA"/>
</dbReference>
<dbReference type="RefSeq" id="WP_011438087.1">
    <property type="nucleotide sequence ID" value="NZ_LRTJ01000048.1"/>
</dbReference>
<dbReference type="SMR" id="Q2J6M9"/>
<dbReference type="STRING" id="106370.Francci3_3711"/>
<dbReference type="KEGG" id="fra:Francci3_3711"/>
<dbReference type="eggNOG" id="COG0711">
    <property type="taxonomic scope" value="Bacteria"/>
</dbReference>
<dbReference type="HOGENOM" id="CLU_079215_5_1_11"/>
<dbReference type="OrthoDB" id="5243563at2"/>
<dbReference type="PhylomeDB" id="Q2J6M9"/>
<dbReference type="Proteomes" id="UP000001937">
    <property type="component" value="Chromosome"/>
</dbReference>
<dbReference type="GO" id="GO:0005886">
    <property type="term" value="C:plasma membrane"/>
    <property type="evidence" value="ECO:0007669"/>
    <property type="project" value="UniProtKB-SubCell"/>
</dbReference>
<dbReference type="GO" id="GO:0045259">
    <property type="term" value="C:proton-transporting ATP synthase complex"/>
    <property type="evidence" value="ECO:0007669"/>
    <property type="project" value="UniProtKB-KW"/>
</dbReference>
<dbReference type="GO" id="GO:0046933">
    <property type="term" value="F:proton-transporting ATP synthase activity, rotational mechanism"/>
    <property type="evidence" value="ECO:0007669"/>
    <property type="project" value="UniProtKB-UniRule"/>
</dbReference>
<dbReference type="GO" id="GO:0046961">
    <property type="term" value="F:proton-transporting ATPase activity, rotational mechanism"/>
    <property type="evidence" value="ECO:0007669"/>
    <property type="project" value="TreeGrafter"/>
</dbReference>
<dbReference type="CDD" id="cd06503">
    <property type="entry name" value="ATP-synt_Fo_b"/>
    <property type="match status" value="1"/>
</dbReference>
<dbReference type="Gene3D" id="1.20.5.620">
    <property type="entry name" value="F1F0 ATP synthase subunit B, membrane domain"/>
    <property type="match status" value="1"/>
</dbReference>
<dbReference type="HAMAP" id="MF_01398">
    <property type="entry name" value="ATP_synth_b_bprime"/>
    <property type="match status" value="1"/>
</dbReference>
<dbReference type="InterPro" id="IPR028987">
    <property type="entry name" value="ATP_synth_B-like_membr_sf"/>
</dbReference>
<dbReference type="InterPro" id="IPR002146">
    <property type="entry name" value="ATP_synth_b/b'su_bac/chlpt"/>
</dbReference>
<dbReference type="InterPro" id="IPR005864">
    <property type="entry name" value="ATP_synth_F0_bsu_bac"/>
</dbReference>
<dbReference type="InterPro" id="IPR050059">
    <property type="entry name" value="ATP_synthase_B_chain"/>
</dbReference>
<dbReference type="NCBIfam" id="TIGR01144">
    <property type="entry name" value="ATP_synt_b"/>
    <property type="match status" value="1"/>
</dbReference>
<dbReference type="NCBIfam" id="NF004412">
    <property type="entry name" value="PRK05759.1-3"/>
    <property type="match status" value="1"/>
</dbReference>
<dbReference type="PANTHER" id="PTHR33445:SF1">
    <property type="entry name" value="ATP SYNTHASE SUBUNIT B"/>
    <property type="match status" value="1"/>
</dbReference>
<dbReference type="PANTHER" id="PTHR33445">
    <property type="entry name" value="ATP SYNTHASE SUBUNIT B', CHLOROPLASTIC"/>
    <property type="match status" value="1"/>
</dbReference>
<dbReference type="Pfam" id="PF00430">
    <property type="entry name" value="ATP-synt_B"/>
    <property type="match status" value="1"/>
</dbReference>
<dbReference type="SUPFAM" id="SSF81573">
    <property type="entry name" value="F1F0 ATP synthase subunit B, membrane domain"/>
    <property type="match status" value="1"/>
</dbReference>
<organism>
    <name type="scientific">Frankia casuarinae (strain DSM 45818 / CECT 9043 / HFP020203 / CcI3)</name>
    <dbReference type="NCBI Taxonomy" id="106370"/>
    <lineage>
        <taxon>Bacteria</taxon>
        <taxon>Bacillati</taxon>
        <taxon>Actinomycetota</taxon>
        <taxon>Actinomycetes</taxon>
        <taxon>Frankiales</taxon>
        <taxon>Frankiaceae</taxon>
        <taxon>Frankia</taxon>
    </lineage>
</organism>
<protein>
    <recommendedName>
        <fullName evidence="1">ATP synthase subunit b</fullName>
    </recommendedName>
    <alternativeName>
        <fullName evidence="1">ATP synthase F(0) sector subunit b</fullName>
    </alternativeName>
    <alternativeName>
        <fullName evidence="1">ATPase subunit I</fullName>
    </alternativeName>
    <alternativeName>
        <fullName evidence="1">F-type ATPase subunit b</fullName>
        <shortName evidence="1">F-ATPase subunit b</shortName>
    </alternativeName>
</protein>
<gene>
    <name evidence="1" type="primary">atpF</name>
    <name type="ordered locus">Francci3_3711</name>
</gene>